<organism>
    <name type="scientific">Mus musculus</name>
    <name type="common">Mouse</name>
    <dbReference type="NCBI Taxonomy" id="10090"/>
    <lineage>
        <taxon>Eukaryota</taxon>
        <taxon>Metazoa</taxon>
        <taxon>Chordata</taxon>
        <taxon>Craniata</taxon>
        <taxon>Vertebrata</taxon>
        <taxon>Euteleostomi</taxon>
        <taxon>Mammalia</taxon>
        <taxon>Eutheria</taxon>
        <taxon>Euarchontoglires</taxon>
        <taxon>Glires</taxon>
        <taxon>Rodentia</taxon>
        <taxon>Myomorpha</taxon>
        <taxon>Muroidea</taxon>
        <taxon>Muridae</taxon>
        <taxon>Murinae</taxon>
        <taxon>Mus</taxon>
        <taxon>Mus</taxon>
    </lineage>
</organism>
<keyword id="KW-0002">3D-structure</keyword>
<keyword id="KW-0007">Acetylation</keyword>
<keyword id="KW-0025">Alternative splicing</keyword>
<keyword id="KW-0966">Cell projection</keyword>
<keyword id="KW-0963">Cytoplasm</keyword>
<keyword id="KW-0344">Guanine-nucleotide releasing factor</keyword>
<keyword id="KW-0539">Nucleus</keyword>
<keyword id="KW-0597">Phosphoprotein</keyword>
<keyword id="KW-1185">Reference proteome</keyword>
<keyword id="KW-0770">Synapse</keyword>
<dbReference type="EMBL" id="GU797481">
    <property type="protein sequence ID" value="ADK73961.1"/>
    <property type="status" value="ALT_INIT"/>
    <property type="molecule type" value="mRNA"/>
</dbReference>
<dbReference type="EMBL" id="AC124672">
    <property type="status" value="NOT_ANNOTATED_CDS"/>
    <property type="molecule type" value="Genomic_DNA"/>
</dbReference>
<dbReference type="EMBL" id="AC132387">
    <property type="status" value="NOT_ANNOTATED_CDS"/>
    <property type="molecule type" value="Genomic_DNA"/>
</dbReference>
<dbReference type="EMBL" id="AK122347">
    <property type="protein sequence ID" value="BAC65629.1"/>
    <property type="molecule type" value="mRNA"/>
</dbReference>
<dbReference type="EMBL" id="AK034064">
    <property type="protein sequence ID" value="BAC28567.1"/>
    <property type="status" value="ALT_INIT"/>
    <property type="molecule type" value="mRNA"/>
</dbReference>
<dbReference type="CCDS" id="CCDS48297.1">
    <molecule id="Q8BZN6-1"/>
</dbReference>
<dbReference type="CCDS" id="CCDS78626.1">
    <molecule id="Q8BZN6-4"/>
</dbReference>
<dbReference type="RefSeq" id="NP_001272856.1">
    <molecule id="Q8BZN6-4"/>
    <property type="nucleotide sequence ID" value="NM_001285927.2"/>
</dbReference>
<dbReference type="RefSeq" id="NP_780500.2">
    <molecule id="Q8BZN6-1"/>
    <property type="nucleotide sequence ID" value="NM_175291.4"/>
</dbReference>
<dbReference type="RefSeq" id="XP_006496530.2">
    <property type="nucleotide sequence ID" value="XM_006496467.3"/>
</dbReference>
<dbReference type="RefSeq" id="XP_006496538.2">
    <property type="nucleotide sequence ID" value="XM_006496475.3"/>
</dbReference>
<dbReference type="RefSeq" id="XP_006496539.1">
    <property type="nucleotide sequence ID" value="XM_006496476.3"/>
</dbReference>
<dbReference type="PDB" id="8I5F">
    <property type="method" value="X-ray"/>
    <property type="resolution" value="2.80 A"/>
    <property type="chains" value="A/B=1664-2150"/>
</dbReference>
<dbReference type="PDB" id="8I5V">
    <property type="method" value="X-ray"/>
    <property type="resolution" value="1.73 A"/>
    <property type="chains" value="A=1875-2150"/>
</dbReference>
<dbReference type="PDB" id="8I5W">
    <property type="method" value="X-ray"/>
    <property type="resolution" value="2.43 A"/>
    <property type="chains" value="A=1875-2150"/>
</dbReference>
<dbReference type="PDBsum" id="8I5F"/>
<dbReference type="PDBsum" id="8I5V"/>
<dbReference type="PDBsum" id="8I5W"/>
<dbReference type="SMR" id="Q8BZN6"/>
<dbReference type="BioGRID" id="229145">
    <property type="interactions" value="8"/>
</dbReference>
<dbReference type="FunCoup" id="Q8BZN6">
    <property type="interactions" value="1581"/>
</dbReference>
<dbReference type="IntAct" id="Q8BZN6">
    <property type="interactions" value="4"/>
</dbReference>
<dbReference type="MINT" id="Q8BZN6"/>
<dbReference type="STRING" id="10090.ENSMUSP00000077099"/>
<dbReference type="GlyGen" id="Q8BZN6">
    <property type="glycosylation" value="2 sites, 1 N-linked glycan (1 site), 1 O-linked glycan (1 site)"/>
</dbReference>
<dbReference type="iPTMnet" id="Q8BZN6"/>
<dbReference type="PhosphoSitePlus" id="Q8BZN6"/>
<dbReference type="SwissPalm" id="Q8BZN6"/>
<dbReference type="jPOST" id="Q8BZN6"/>
<dbReference type="PaxDb" id="10090-ENSMUSP00000077099"/>
<dbReference type="PeptideAtlas" id="Q8BZN6"/>
<dbReference type="ProteomicsDB" id="279750">
    <molecule id="Q8BZN6-1"/>
</dbReference>
<dbReference type="ProteomicsDB" id="279751">
    <molecule id="Q8BZN6-2"/>
</dbReference>
<dbReference type="ProteomicsDB" id="279752">
    <molecule id="Q8BZN6-3"/>
</dbReference>
<dbReference type="ProteomicsDB" id="279753">
    <molecule id="Q8BZN6-4"/>
</dbReference>
<dbReference type="ProteomicsDB" id="310194"/>
<dbReference type="ProteomicsDB" id="345578"/>
<dbReference type="Antibodypedia" id="34369">
    <property type="antibodies" value="57 antibodies from 15 providers"/>
</dbReference>
<dbReference type="Ensembl" id="ENSMUST00000077946.12">
    <molecule id="Q8BZN6-1"/>
    <property type="protein sequence ID" value="ENSMUSP00000077099.6"/>
    <property type="gene ID" value="ENSMUSG00000038608.16"/>
</dbReference>
<dbReference type="Ensembl" id="ENSMUST00000187774.7">
    <molecule id="Q8BZN6-4"/>
    <property type="protein sequence ID" value="ENSMUSP00000140085.2"/>
    <property type="gene ID" value="ENSMUSG00000038608.16"/>
</dbReference>
<dbReference type="GeneID" id="210293"/>
<dbReference type="KEGG" id="mmu:210293"/>
<dbReference type="UCSC" id="uc007brf.1">
    <molecule id="Q8BZN6-2"/>
    <property type="organism name" value="mouse"/>
</dbReference>
<dbReference type="AGR" id="MGI:2146320"/>
<dbReference type="CTD" id="55619"/>
<dbReference type="MGI" id="MGI:2146320">
    <property type="gene designation" value="Dock10"/>
</dbReference>
<dbReference type="VEuPathDB" id="HostDB:ENSMUSG00000038608"/>
<dbReference type="eggNOG" id="KOG1997">
    <property type="taxonomic scope" value="Eukaryota"/>
</dbReference>
<dbReference type="GeneTree" id="ENSGT00940000157469"/>
<dbReference type="InParanoid" id="Q8BZN6"/>
<dbReference type="OMA" id="RACNTPP"/>
<dbReference type="OrthoDB" id="47328at2759"/>
<dbReference type="PhylomeDB" id="Q8BZN6"/>
<dbReference type="TreeFam" id="TF313629"/>
<dbReference type="Reactome" id="R-MMU-9013148">
    <property type="pathway name" value="CDC42 GTPase cycle"/>
</dbReference>
<dbReference type="Reactome" id="R-MMU-9013149">
    <property type="pathway name" value="RAC1 GTPase cycle"/>
</dbReference>
<dbReference type="Reactome" id="R-MMU-9013404">
    <property type="pathway name" value="RAC2 GTPase cycle"/>
</dbReference>
<dbReference type="Reactome" id="R-MMU-9013423">
    <property type="pathway name" value="RAC3 GTPase cycle"/>
</dbReference>
<dbReference type="Reactome" id="R-MMU-983231">
    <property type="pathway name" value="Factors involved in megakaryocyte development and platelet production"/>
</dbReference>
<dbReference type="BioGRID-ORCS" id="210293">
    <property type="hits" value="2 hits in 77 CRISPR screens"/>
</dbReference>
<dbReference type="CD-CODE" id="CE726F99">
    <property type="entry name" value="Postsynaptic density"/>
</dbReference>
<dbReference type="ChiTaRS" id="Dock10">
    <property type="organism name" value="mouse"/>
</dbReference>
<dbReference type="PRO" id="PR:Q8BZN6"/>
<dbReference type="Proteomes" id="UP000000589">
    <property type="component" value="Chromosome 1"/>
</dbReference>
<dbReference type="RNAct" id="Q8BZN6">
    <property type="molecule type" value="protein"/>
</dbReference>
<dbReference type="Bgee" id="ENSMUSG00000038608">
    <property type="expression patterns" value="Expressed in mesenteric lymph node and 229 other cell types or tissues"/>
</dbReference>
<dbReference type="GO" id="GO:0005737">
    <property type="term" value="C:cytoplasm"/>
    <property type="evidence" value="ECO:0000250"/>
    <property type="project" value="UniProtKB"/>
</dbReference>
<dbReference type="GO" id="GO:0005829">
    <property type="term" value="C:cytosol"/>
    <property type="evidence" value="ECO:0007669"/>
    <property type="project" value="Ensembl"/>
</dbReference>
<dbReference type="GO" id="GO:0043197">
    <property type="term" value="C:dendritic spine"/>
    <property type="evidence" value="ECO:0000314"/>
    <property type="project" value="UniProtKB"/>
</dbReference>
<dbReference type="GO" id="GO:0098978">
    <property type="term" value="C:glutamatergic synapse"/>
    <property type="evidence" value="ECO:0000314"/>
    <property type="project" value="SynGO"/>
</dbReference>
<dbReference type="GO" id="GO:0005654">
    <property type="term" value="C:nucleoplasm"/>
    <property type="evidence" value="ECO:0007669"/>
    <property type="project" value="Ensembl"/>
</dbReference>
<dbReference type="GO" id="GO:0005634">
    <property type="term" value="C:nucleus"/>
    <property type="evidence" value="ECO:0000250"/>
    <property type="project" value="UniProtKB"/>
</dbReference>
<dbReference type="GO" id="GO:0098794">
    <property type="term" value="C:postsynapse"/>
    <property type="evidence" value="ECO:0000314"/>
    <property type="project" value="SynGO"/>
</dbReference>
<dbReference type="GO" id="GO:0005085">
    <property type="term" value="F:guanyl-nucleotide exchange factor activity"/>
    <property type="evidence" value="ECO:0000314"/>
    <property type="project" value="UniProtKB"/>
</dbReference>
<dbReference type="GO" id="GO:0031267">
    <property type="term" value="F:small GTPase binding"/>
    <property type="evidence" value="ECO:0000353"/>
    <property type="project" value="MGI"/>
</dbReference>
<dbReference type="GO" id="GO:0001782">
    <property type="term" value="P:B cell homeostasis"/>
    <property type="evidence" value="ECO:0000315"/>
    <property type="project" value="UniProtKB"/>
</dbReference>
<dbReference type="GO" id="GO:0060997">
    <property type="term" value="P:dendritic spine morphogenesis"/>
    <property type="evidence" value="ECO:0000315"/>
    <property type="project" value="UniProtKB"/>
</dbReference>
<dbReference type="GO" id="GO:0002315">
    <property type="term" value="P:marginal zone B cell differentiation"/>
    <property type="evidence" value="ECO:0000315"/>
    <property type="project" value="UniProtKB"/>
</dbReference>
<dbReference type="GO" id="GO:0043547">
    <property type="term" value="P:positive regulation of GTPase activity"/>
    <property type="evidence" value="ECO:0000314"/>
    <property type="project" value="UniProtKB"/>
</dbReference>
<dbReference type="GO" id="GO:0030334">
    <property type="term" value="P:regulation of cell migration"/>
    <property type="evidence" value="ECO:0007669"/>
    <property type="project" value="Ensembl"/>
</dbReference>
<dbReference type="GO" id="GO:0150052">
    <property type="term" value="P:regulation of postsynapse assembly"/>
    <property type="evidence" value="ECO:0000314"/>
    <property type="project" value="SynGO"/>
</dbReference>
<dbReference type="GO" id="GO:0007264">
    <property type="term" value="P:small GTPase-mediated signal transduction"/>
    <property type="evidence" value="ECO:0007669"/>
    <property type="project" value="InterPro"/>
</dbReference>
<dbReference type="CDD" id="cd08697">
    <property type="entry name" value="C2_Dock-D"/>
    <property type="match status" value="1"/>
</dbReference>
<dbReference type="CDD" id="cd11699">
    <property type="entry name" value="DHR2_DOCK10"/>
    <property type="match status" value="1"/>
</dbReference>
<dbReference type="CDD" id="cd13267">
    <property type="entry name" value="PH_DOCK-D"/>
    <property type="match status" value="1"/>
</dbReference>
<dbReference type="FunFam" id="1.20.58.740:FF:000001">
    <property type="entry name" value="dedicator of cytokinesis protein 9 isoform X1"/>
    <property type="match status" value="1"/>
</dbReference>
<dbReference type="FunFam" id="2.30.29.30:FF:000016">
    <property type="entry name" value="dedicator of cytokinesis protein 9 isoform X1"/>
    <property type="match status" value="1"/>
</dbReference>
<dbReference type="FunFam" id="2.60.40.150:FF:000015">
    <property type="entry name" value="dedicator of cytokinesis protein 9 isoform X1"/>
    <property type="match status" value="1"/>
</dbReference>
<dbReference type="Gene3D" id="1.20.58.740">
    <property type="match status" value="1"/>
</dbReference>
<dbReference type="Gene3D" id="1.25.40.410">
    <property type="match status" value="1"/>
</dbReference>
<dbReference type="Gene3D" id="2.60.40.150">
    <property type="entry name" value="C2 domain"/>
    <property type="match status" value="1"/>
</dbReference>
<dbReference type="Gene3D" id="2.30.29.30">
    <property type="entry name" value="Pleckstrin-homology domain (PH domain)/Phosphotyrosine-binding domain (PTB)"/>
    <property type="match status" value="1"/>
</dbReference>
<dbReference type="InterPro" id="IPR037809">
    <property type="entry name" value="C2_Dock-D"/>
</dbReference>
<dbReference type="InterPro" id="IPR027007">
    <property type="entry name" value="C2_DOCK-type_domain"/>
</dbReference>
<dbReference type="InterPro" id="IPR035892">
    <property type="entry name" value="C2_domain_sf"/>
</dbReference>
<dbReference type="InterPro" id="IPR026791">
    <property type="entry name" value="DOCK"/>
</dbReference>
<dbReference type="InterPro" id="IPR021816">
    <property type="entry name" value="DOCK_C/D_N"/>
</dbReference>
<dbReference type="InterPro" id="IPR043161">
    <property type="entry name" value="DOCK_C_lobe_A"/>
</dbReference>
<dbReference type="InterPro" id="IPR043162">
    <property type="entry name" value="DOCK_C_lobe_C"/>
</dbReference>
<dbReference type="InterPro" id="IPR027357">
    <property type="entry name" value="DOCKER_dom"/>
</dbReference>
<dbReference type="InterPro" id="IPR046769">
    <property type="entry name" value="DOCKER_Lobe_A"/>
</dbReference>
<dbReference type="InterPro" id="IPR046770">
    <property type="entry name" value="DOCKER_Lobe_B"/>
</dbReference>
<dbReference type="InterPro" id="IPR046773">
    <property type="entry name" value="DOCKER_Lobe_C"/>
</dbReference>
<dbReference type="InterPro" id="IPR011993">
    <property type="entry name" value="PH-like_dom_sf"/>
</dbReference>
<dbReference type="InterPro" id="IPR001849">
    <property type="entry name" value="PH_domain"/>
</dbReference>
<dbReference type="PANTHER" id="PTHR23317">
    <property type="entry name" value="DEDICATOR OF CYTOKINESIS DOCK"/>
    <property type="match status" value="1"/>
</dbReference>
<dbReference type="PANTHER" id="PTHR23317:SF71">
    <property type="entry name" value="DEDICATOR OF CYTOKINESIS PROTEIN 10"/>
    <property type="match status" value="1"/>
</dbReference>
<dbReference type="Pfam" id="PF06920">
    <property type="entry name" value="DHR-2_Lobe_A"/>
    <property type="match status" value="2"/>
</dbReference>
<dbReference type="Pfam" id="PF20422">
    <property type="entry name" value="DHR-2_Lobe_B"/>
    <property type="match status" value="1"/>
</dbReference>
<dbReference type="Pfam" id="PF20421">
    <property type="entry name" value="DHR-2_Lobe_C"/>
    <property type="match status" value="1"/>
</dbReference>
<dbReference type="Pfam" id="PF14429">
    <property type="entry name" value="DOCK-C2"/>
    <property type="match status" value="1"/>
</dbReference>
<dbReference type="Pfam" id="PF11878">
    <property type="entry name" value="DOCK_C-D_N"/>
    <property type="match status" value="1"/>
</dbReference>
<dbReference type="Pfam" id="PF00169">
    <property type="entry name" value="PH"/>
    <property type="match status" value="1"/>
</dbReference>
<dbReference type="SMART" id="SM00233">
    <property type="entry name" value="PH"/>
    <property type="match status" value="1"/>
</dbReference>
<dbReference type="SUPFAM" id="SSF50729">
    <property type="entry name" value="PH domain-like"/>
    <property type="match status" value="1"/>
</dbReference>
<dbReference type="PROSITE" id="PS51650">
    <property type="entry name" value="C2_DOCK"/>
    <property type="match status" value="1"/>
</dbReference>
<dbReference type="PROSITE" id="PS51651">
    <property type="entry name" value="DOCKER"/>
    <property type="match status" value="1"/>
</dbReference>
<dbReference type="PROSITE" id="PS50003">
    <property type="entry name" value="PH_DOMAIN"/>
    <property type="match status" value="1"/>
</dbReference>
<sequence length="2187" mass="249576">MAGERTRRFTRSLLRPGQAAELRHSAASAAAVAVSSRQQQRQEKPRLLDPLDYETVIEELEKTYRDDPLQDLLFFPSDDFSTATVSWDIRTLYSTVPEEAEHRAESLLVKEACKFYSSQWYVVNYKYEQYSGDIRQLPRAEHKPEKLPSHSFEVDHEDADKDEDTTSHSSSKGGGGAGGTGVFKSGWLYKGNFNSTVNNTVTVRSFKKRYFQLTQLPDNSYIMNFYKDEKISKEPKGCIFLDSCTGVVQNNRLRKYAFELKMNDLTYFVLAAETESDMDEWIHTLNRILQISPEGPLQGRKSAELAELGLDPLDNCVTCECTLEETDSSENSLHPDFAKYLTETEDTVKTTRNMGRLNLFSLDPDIDTLKLQKRDSFENELMIKPFEEKAAKRIMIICRALNFNLQGCVTENEYDPVTNIEPFFVSVALYDLRDNRKISADFHVDLNHPAVRQMLSGTPPALENGNIDTGTPRQSEEPHIKGLPEEWLKFPKQAVFSVSDPHSEIVLVAKVEKVLMGNIGSGAEPYIKNPDSNKFAQKILKSNRQFCSKLGKYRMPFAWAVRSVFKDNQGNVDRDSRFSPLYRQESSKMSSEDLLKLVSDYRRADRISKMQSIPGSLDIAVDNIPLEHPNCVTSSFIPVKPFNVSAQSEPTVEVEEFIYDSTKYCRPYRVYKNQIYVYPKHLKYDSQKCFNKARNITVCIEFKNSDDDGAKPMKCIYGKPGGPLFTSSAYTAVLHHSQNPDFSDEVKIELPTQLHGKHHLLFSFYHITCDINAKANAKKKEALETSVGYAWLPLMKHDQIASQEYNIPIATTLPPNYLSIQDPTSAKHGGSDIKWVDGGKPLFKVSTFVVSTVNTQDPHVNAFFRQCQKREKDMSQSPTSSFVRACKNLLNVDKIHSIMSFLPIILNQLFKILVQNEEDEITATVTRVLADIVAKCHEEQLDHSVQSYIKFVFKTKSYKERTIHEELAKNLSDLLKSNDSTIVKHVLEHSWFFFAIILKSMAQHLIDTNKIQLPRAQRFPESYQSELDNLVMGLCDHVIWKCKEAPEETKRANHSVARFLKRCFTFMDRGFVFKMVNNYISMFSSGEFKTLCQYKFDFLQEVCQHEHFIPLCLPIRSANIPDPLTPSESIRELHASDMPEYSVTNEFCRKHFLIGILLREVGFALQEDQDIRHLALAVLKNLMAKHSFDDRYREPRKQAQIASLYMPLYGMLLDNMPRIYLKDLYPFTVNTSNQGSRDDLSTNGGFQTQTSMKHATSVDTSFSKDVLNSIAAFSSIAISTVNHADSRASLASLDSNPSTTEKSSEKTDNCEKIPRPLSLIGSTLRFDKLDQAETRSLLMCFLHIMKTISDETLIAYWQRAPSPEVSDFFSILDVCLQNFRYLGKRNIIRKIAAAFKFVQSTQNNGTLKGSNPSCQTSGLLSQWMHTTSGHEGHKQHRSQTLPIIRGKNALSNPKLLQMLDNSMNSNSNEIDIVHHVDTEANIATEVCLTILDLLSLFTQVHQRQLQQSDCQNSLMKRVFDTYMLFFQVNQSASALKHVFASLRLFVCKFPSAFFQGPADLCGSFCYEVLKCCNHRSRLTQMEASALLYFFMRKNFEFNKQKSIVRSHLQLIKAVSQLIADAGIGGSRFQHSLAITNNFANGDKQMKNSNFPAEVKDLTKRIRTVLMATAQMKEHEKDPEMLVDLQYSLANSYASTPELRRTWLESMAKIHARNGDLSEAAMCYIHIAALIAEYLKRKGYWKMEKICTPPLLPEDTQPCDSNLLLTTPGGGSMFSMGWPAFLSITPNIKEEGAMKEDSGMQDTPYNENILVEQLYMCVEFLWKSERYELIADVNKPIIAVFEKQRDFKKLSDLYYDIHRSYLKVAEVVNSEKRLFGRYYRVAFYGQGFFEEEEGKEYIYKEPKLTGLSEISQRLLKLYADKFGADNVKIIQDSNKVNPKDLDPKYAYIQVTYVTPFFEEKEIEDRKTDFEMHHNINRFVFETPFTLSGKKHGGVAEQCKRRTVLTTSHLFPYVKKRIQVISQSSTELNPIEVAIDEMSRKVSELNQLCTTEEVDMIRLQLKLQGSVSVKVNAGPMAYARAFLEETNAKKYPDNQVKLLKEIFRQFADACGQALDVNERLIKEDQLEYQEELRSHYKDMLSELSAIMNEQITGRDDPAKCGVERPYTTRVTSKGTAAVPVVSISSSAEV</sequence>
<gene>
    <name evidence="15" type="primary">Dock10</name>
    <name type="synonym">Kiaa0694</name>
    <name type="synonym">Ziz3</name>
</gene>
<accession>Q8BZN6</accession>
<accession>A0A087WQ86</accession>
<accession>E9QM99</accession>
<accession>F1AHI9</accession>
<reference key="1">
    <citation type="journal article" date="2011" name="Hum. Immunol.">
        <title>Human and mouse DOCK10 splicing isoforms with alternative first coding exon usage are differentially expressed in T and B lymphocytes.</title>
        <authorList>
            <person name="Alcaraz-Garcia M.J."/>
            <person name="Ruiz-Lafuente N."/>
            <person name="Sebastian-Ruiz S."/>
            <person name="Majado M.J."/>
            <person name="Gonzalez-Garcia C."/>
            <person name="Bernardo M.V."/>
            <person name="Alvarez-Lopez M.R."/>
            <person name="Parrado A."/>
        </authorList>
    </citation>
    <scope>NUCLEOTIDE SEQUENCE [MRNA] (ISOFORM 4)</scope>
    <scope>TISSUE SPECIFICITY</scope>
    <scope>INDUCTION BY IL4</scope>
    <source>
        <strain>BALB/cJ</strain>
        <tissue>Spleen</tissue>
    </source>
</reference>
<reference key="2">
    <citation type="journal article" date="2009" name="PLoS Biol.">
        <title>Lineage-specific biology revealed by a finished genome assembly of the mouse.</title>
        <authorList>
            <person name="Church D.M."/>
            <person name="Goodstadt L."/>
            <person name="Hillier L.W."/>
            <person name="Zody M.C."/>
            <person name="Goldstein S."/>
            <person name="She X."/>
            <person name="Bult C.J."/>
            <person name="Agarwala R."/>
            <person name="Cherry J.L."/>
            <person name="DiCuccio M."/>
            <person name="Hlavina W."/>
            <person name="Kapustin Y."/>
            <person name="Meric P."/>
            <person name="Maglott D."/>
            <person name="Birtle Z."/>
            <person name="Marques A.C."/>
            <person name="Graves T."/>
            <person name="Zhou S."/>
            <person name="Teague B."/>
            <person name="Potamousis K."/>
            <person name="Churas C."/>
            <person name="Place M."/>
            <person name="Herschleb J."/>
            <person name="Runnheim R."/>
            <person name="Forrest D."/>
            <person name="Amos-Landgraf J."/>
            <person name="Schwartz D.C."/>
            <person name="Cheng Z."/>
            <person name="Lindblad-Toh K."/>
            <person name="Eichler E.E."/>
            <person name="Ponting C.P."/>
        </authorList>
    </citation>
    <scope>NUCLEOTIDE SEQUENCE [LARGE SCALE GENOMIC DNA]</scope>
    <source>
        <strain>C57BL/6J</strain>
    </source>
</reference>
<reference key="3">
    <citation type="journal article" date="2003" name="DNA Res.">
        <title>Prediction of the coding sequences of mouse homologues of KIAA gene: II. The complete nucleotide sequences of 400 mouse KIAA-homologous cDNAs identified by screening of terminal sequences of cDNA clones randomly sampled from size-fractionated libraries.</title>
        <authorList>
            <person name="Okazaki N."/>
            <person name="Kikuno R."/>
            <person name="Ohara R."/>
            <person name="Inamoto S."/>
            <person name="Aizawa H."/>
            <person name="Yuasa S."/>
            <person name="Nakajima D."/>
            <person name="Nagase T."/>
            <person name="Ohara O."/>
            <person name="Koga H."/>
        </authorList>
    </citation>
    <scope>NUCLEOTIDE SEQUENCE [LARGE SCALE MRNA] OF 348-2187 (ISOFORM 2)</scope>
    <source>
        <tissue>Brain</tissue>
    </source>
</reference>
<reference key="4">
    <citation type="journal article" date="2005" name="Science">
        <title>The transcriptional landscape of the mammalian genome.</title>
        <authorList>
            <person name="Carninci P."/>
            <person name="Kasukawa T."/>
            <person name="Katayama S."/>
            <person name="Gough J."/>
            <person name="Frith M.C."/>
            <person name="Maeda N."/>
            <person name="Oyama R."/>
            <person name="Ravasi T."/>
            <person name="Lenhard B."/>
            <person name="Wells C."/>
            <person name="Kodzius R."/>
            <person name="Shimokawa K."/>
            <person name="Bajic V.B."/>
            <person name="Brenner S.E."/>
            <person name="Batalov S."/>
            <person name="Forrest A.R."/>
            <person name="Zavolan M."/>
            <person name="Davis M.J."/>
            <person name="Wilming L.G."/>
            <person name="Aidinis V."/>
            <person name="Allen J.E."/>
            <person name="Ambesi-Impiombato A."/>
            <person name="Apweiler R."/>
            <person name="Aturaliya R.N."/>
            <person name="Bailey T.L."/>
            <person name="Bansal M."/>
            <person name="Baxter L."/>
            <person name="Beisel K.W."/>
            <person name="Bersano T."/>
            <person name="Bono H."/>
            <person name="Chalk A.M."/>
            <person name="Chiu K.P."/>
            <person name="Choudhary V."/>
            <person name="Christoffels A."/>
            <person name="Clutterbuck D.R."/>
            <person name="Crowe M.L."/>
            <person name="Dalla E."/>
            <person name="Dalrymple B.P."/>
            <person name="de Bono B."/>
            <person name="Della Gatta G."/>
            <person name="di Bernardo D."/>
            <person name="Down T."/>
            <person name="Engstrom P."/>
            <person name="Fagiolini M."/>
            <person name="Faulkner G."/>
            <person name="Fletcher C.F."/>
            <person name="Fukushima T."/>
            <person name="Furuno M."/>
            <person name="Futaki S."/>
            <person name="Gariboldi M."/>
            <person name="Georgii-Hemming P."/>
            <person name="Gingeras T.R."/>
            <person name="Gojobori T."/>
            <person name="Green R.E."/>
            <person name="Gustincich S."/>
            <person name="Harbers M."/>
            <person name="Hayashi Y."/>
            <person name="Hensch T.K."/>
            <person name="Hirokawa N."/>
            <person name="Hill D."/>
            <person name="Huminiecki L."/>
            <person name="Iacono M."/>
            <person name="Ikeo K."/>
            <person name="Iwama A."/>
            <person name="Ishikawa T."/>
            <person name="Jakt M."/>
            <person name="Kanapin A."/>
            <person name="Katoh M."/>
            <person name="Kawasawa Y."/>
            <person name="Kelso J."/>
            <person name="Kitamura H."/>
            <person name="Kitano H."/>
            <person name="Kollias G."/>
            <person name="Krishnan S.P."/>
            <person name="Kruger A."/>
            <person name="Kummerfeld S.K."/>
            <person name="Kurochkin I.V."/>
            <person name="Lareau L.F."/>
            <person name="Lazarevic D."/>
            <person name="Lipovich L."/>
            <person name="Liu J."/>
            <person name="Liuni S."/>
            <person name="McWilliam S."/>
            <person name="Madan Babu M."/>
            <person name="Madera M."/>
            <person name="Marchionni L."/>
            <person name="Matsuda H."/>
            <person name="Matsuzawa S."/>
            <person name="Miki H."/>
            <person name="Mignone F."/>
            <person name="Miyake S."/>
            <person name="Morris K."/>
            <person name="Mottagui-Tabar S."/>
            <person name="Mulder N."/>
            <person name="Nakano N."/>
            <person name="Nakauchi H."/>
            <person name="Ng P."/>
            <person name="Nilsson R."/>
            <person name="Nishiguchi S."/>
            <person name="Nishikawa S."/>
            <person name="Nori F."/>
            <person name="Ohara O."/>
            <person name="Okazaki Y."/>
            <person name="Orlando V."/>
            <person name="Pang K.C."/>
            <person name="Pavan W.J."/>
            <person name="Pavesi G."/>
            <person name="Pesole G."/>
            <person name="Petrovsky N."/>
            <person name="Piazza S."/>
            <person name="Reed J."/>
            <person name="Reid J.F."/>
            <person name="Ring B.Z."/>
            <person name="Ringwald M."/>
            <person name="Rost B."/>
            <person name="Ruan Y."/>
            <person name="Salzberg S.L."/>
            <person name="Sandelin A."/>
            <person name="Schneider C."/>
            <person name="Schoenbach C."/>
            <person name="Sekiguchi K."/>
            <person name="Semple C.A."/>
            <person name="Seno S."/>
            <person name="Sessa L."/>
            <person name="Sheng Y."/>
            <person name="Shibata Y."/>
            <person name="Shimada H."/>
            <person name="Shimada K."/>
            <person name="Silva D."/>
            <person name="Sinclair B."/>
            <person name="Sperling S."/>
            <person name="Stupka E."/>
            <person name="Sugiura K."/>
            <person name="Sultana R."/>
            <person name="Takenaka Y."/>
            <person name="Taki K."/>
            <person name="Tammoja K."/>
            <person name="Tan S.L."/>
            <person name="Tang S."/>
            <person name="Taylor M.S."/>
            <person name="Tegner J."/>
            <person name="Teichmann S.A."/>
            <person name="Ueda H.R."/>
            <person name="van Nimwegen E."/>
            <person name="Verardo R."/>
            <person name="Wei C.L."/>
            <person name="Yagi K."/>
            <person name="Yamanishi H."/>
            <person name="Zabarovsky E."/>
            <person name="Zhu S."/>
            <person name="Zimmer A."/>
            <person name="Hide W."/>
            <person name="Bult C."/>
            <person name="Grimmond S.M."/>
            <person name="Teasdale R.D."/>
            <person name="Liu E.T."/>
            <person name="Brusic V."/>
            <person name="Quackenbush J."/>
            <person name="Wahlestedt C."/>
            <person name="Mattick J.S."/>
            <person name="Hume D.A."/>
            <person name="Kai C."/>
            <person name="Sasaki D."/>
            <person name="Tomaru Y."/>
            <person name="Fukuda S."/>
            <person name="Kanamori-Katayama M."/>
            <person name="Suzuki M."/>
            <person name="Aoki J."/>
            <person name="Arakawa T."/>
            <person name="Iida J."/>
            <person name="Imamura K."/>
            <person name="Itoh M."/>
            <person name="Kato T."/>
            <person name="Kawaji H."/>
            <person name="Kawagashira N."/>
            <person name="Kawashima T."/>
            <person name="Kojima M."/>
            <person name="Kondo S."/>
            <person name="Konno H."/>
            <person name="Nakano K."/>
            <person name="Ninomiya N."/>
            <person name="Nishio T."/>
            <person name="Okada M."/>
            <person name="Plessy C."/>
            <person name="Shibata K."/>
            <person name="Shiraki T."/>
            <person name="Suzuki S."/>
            <person name="Tagami M."/>
            <person name="Waki K."/>
            <person name="Watahiki A."/>
            <person name="Okamura-Oho Y."/>
            <person name="Suzuki H."/>
            <person name="Kawai J."/>
            <person name="Hayashizaki Y."/>
        </authorList>
    </citation>
    <scope>NUCLEOTIDE SEQUENCE [LARGE SCALE MRNA] OF 1690-2187 (ISOFORM 3)</scope>
    <source>
        <strain>C57BL/6J</strain>
        <tissue>Diencephalon</tissue>
    </source>
</reference>
<reference key="5">
    <citation type="journal article" date="2005" name="FEBS Lett.">
        <title>Zizimin2: a novel, DOCK180-related Cdc42 guanine nucleotide exchange factor expressed predominantly in lymphocytes.</title>
        <authorList>
            <person name="Nishikimi A."/>
            <person name="Meller N."/>
            <person name="Uekawa N."/>
            <person name="Isobe K."/>
            <person name="Schwartz M.A."/>
            <person name="Maruyama M."/>
        </authorList>
    </citation>
    <scope>TISSUE SPECIFICITY</scope>
</reference>
<reference key="6">
    <citation type="journal article" date="2009" name="Immunity">
        <title>The phagosomal proteome in interferon-gamma-activated macrophages.</title>
        <authorList>
            <person name="Trost M."/>
            <person name="English L."/>
            <person name="Lemieux S."/>
            <person name="Courcelles M."/>
            <person name="Desjardins M."/>
            <person name="Thibault P."/>
        </authorList>
    </citation>
    <scope>PHOSPHORYLATION [LARGE SCALE ANALYSIS] AT SER-877; SER-1251; SER-1257; SER-1292; SER-1295 AND THR-1440</scope>
    <scope>IDENTIFICATION BY MASS SPECTROMETRY [LARGE SCALE ANALYSIS]</scope>
</reference>
<reference key="7">
    <citation type="journal article" date="2010" name="Cell">
        <title>A tissue-specific atlas of mouse protein phosphorylation and expression.</title>
        <authorList>
            <person name="Huttlin E.L."/>
            <person name="Jedrychowski M.P."/>
            <person name="Elias J.E."/>
            <person name="Goswami T."/>
            <person name="Rad R."/>
            <person name="Beausoleil S.A."/>
            <person name="Villen J."/>
            <person name="Haas W."/>
            <person name="Sowa M.E."/>
            <person name="Gygi S.P."/>
        </authorList>
    </citation>
    <scope>PHOSPHORYLATION [LARGE SCALE ANALYSIS] AT THR-196; SER-302; THR-368; SER-1257; SER-1292; SER-1295; SER-1318 AND THR-1406</scope>
    <scope>IDENTIFICATION BY MASS SPECTROMETRY [LARGE SCALE ANALYSIS]</scope>
    <source>
        <tissue>Brain</tissue>
        <tissue>Kidney</tissue>
        <tissue>Lung</tissue>
        <tissue>Spleen</tissue>
    </source>
</reference>
<reference key="8">
    <citation type="journal article" date="2015" name="Immun. Ageing">
        <title>The immunosenescence-related gene Zizimin2 is associated with early bone marrow B cell development and marginal zone B cell formation.</title>
        <authorList>
            <person name="Matsuda T."/>
            <person name="Yanase S."/>
            <person name="Takaoka A."/>
            <person name="Maruyama M."/>
        </authorList>
    </citation>
    <scope>DISRUPTION PHENOTYPE</scope>
    <scope>TISSUE SPECIFICITY</scope>
</reference>
<reference key="9">
    <citation type="journal article" date="2015" name="Mol. Biol. Cell">
        <title>The RhoGEF DOCK10 is essential for dendritic spine morphogenesis.</title>
        <authorList>
            <person name="Jaudon F."/>
            <person name="Raynaud F."/>
            <person name="Wehrle R."/>
            <person name="Bellanger J.M."/>
            <person name="Doulazmi M."/>
            <person name="Vodjdani G."/>
            <person name="Gasman S."/>
            <person name="Fagni L."/>
            <person name="Dusart I."/>
            <person name="Debant A."/>
            <person name="Schmidt S."/>
        </authorList>
    </citation>
    <scope>FUNCTION</scope>
    <scope>TISSUE SPECIFICITY</scope>
    <scope>DEVELOPMENTAL STAGE</scope>
    <scope>SUBCELLULAR LOCATION</scope>
    <scope>DOMAIN</scope>
</reference>
<reference key="10">
    <citation type="journal article" date="2016" name="Immunobiology">
        <title>Dock10 regulates CD23 expression and sustains B-cell lymphopoiesis in secondary lymphoid tissue.</title>
        <authorList>
            <person name="Garcia-Serna A.M."/>
            <person name="Alcaraz-Garcia M.J."/>
            <person name="Ruiz-Lafuente N."/>
            <person name="Sebastian-Ruiz S."/>
            <person name="Martinez C.M."/>
            <person name="Moya-Quiles M.R."/>
            <person name="Minguela A."/>
            <person name="Garcia-Alonso A.M."/>
            <person name="Martin-Orozco E."/>
            <person name="Parrado A."/>
        </authorList>
    </citation>
    <scope>FUNCTION</scope>
    <scope>DISRUPTION PHENOTYPE</scope>
</reference>
<feature type="chain" id="PRO_0000190003" description="Dedicator of cytokinesis protein 10">
    <location>
        <begin position="1"/>
        <end position="2187"/>
    </location>
</feature>
<feature type="domain" description="PH" evidence="2">
    <location>
        <begin position="181"/>
        <end position="290"/>
    </location>
</feature>
<feature type="domain" description="C2 DOCK-type" evidence="3">
    <location>
        <begin position="672"/>
        <end position="850"/>
    </location>
</feature>
<feature type="domain" description="DOCKER" evidence="4">
    <location>
        <begin position="1690"/>
        <end position="2150"/>
    </location>
</feature>
<feature type="region of interest" description="Disordered" evidence="5">
    <location>
        <begin position="141"/>
        <end position="177"/>
    </location>
</feature>
<feature type="region of interest" description="Disordered" evidence="5">
    <location>
        <begin position="458"/>
        <end position="478"/>
    </location>
</feature>
<feature type="region of interest" description="Disordered" evidence="5">
    <location>
        <begin position="1291"/>
        <end position="1311"/>
    </location>
</feature>
<feature type="compositionally biased region" description="Basic and acidic residues" evidence="5">
    <location>
        <begin position="141"/>
        <end position="154"/>
    </location>
</feature>
<feature type="compositionally biased region" description="Basic and acidic residues" evidence="5">
    <location>
        <begin position="1302"/>
        <end position="1311"/>
    </location>
</feature>
<feature type="modified residue" description="Phosphothreonine" evidence="17">
    <location>
        <position position="196"/>
    </location>
</feature>
<feature type="modified residue" description="Phosphoserine" evidence="17">
    <location>
        <position position="302"/>
    </location>
</feature>
<feature type="modified residue" description="Phosphothreonine" evidence="17">
    <location>
        <position position="368"/>
    </location>
</feature>
<feature type="modified residue" description="N6-acetyllysine" evidence="1">
    <location>
        <position position="834"/>
    </location>
</feature>
<feature type="modified residue" description="Phosphoserine" evidence="16">
    <location>
        <position position="877"/>
    </location>
</feature>
<feature type="modified residue" description="Phosphoserine" evidence="1">
    <location>
        <position position="1232"/>
    </location>
</feature>
<feature type="modified residue" description="Phosphoserine" evidence="16">
    <location>
        <position position="1251"/>
    </location>
</feature>
<feature type="modified residue" description="Phosphoserine" evidence="16 17">
    <location>
        <position position="1257"/>
    </location>
</feature>
<feature type="modified residue" description="Phosphoserine" evidence="16 17">
    <location>
        <position position="1292"/>
    </location>
</feature>
<feature type="modified residue" description="Phosphoserine" evidence="16 17">
    <location>
        <position position="1295"/>
    </location>
</feature>
<feature type="modified residue" description="Phosphoserine" evidence="17">
    <location>
        <position position="1318"/>
    </location>
</feature>
<feature type="modified residue" description="Phosphothreonine" evidence="17">
    <location>
        <position position="1406"/>
    </location>
</feature>
<feature type="modified residue" description="Phosphothreonine" evidence="16">
    <location>
        <position position="1440"/>
    </location>
</feature>
<feature type="splice variant" id="VSP_058821" description="In isoform 4.">
    <original>MAGERTRRFTRSLLRPGQAAELRHSAASAAAVAVSSRQQQR</original>
    <variation>MMSFRGKEFWKRRRTVKRVNPEGIHKAGA</variation>
    <location>
        <begin position="1"/>
        <end position="41"/>
    </location>
</feature>
<feature type="splice variant" id="VSP_007718" description="In isoform 2 and isoform 3." evidence="11 12">
    <location>
        <begin position="1739"/>
        <end position="1771"/>
    </location>
</feature>
<feature type="splice variant" id="VSP_061616" description="In isoform 2 and isoform 3.">
    <original>Q</original>
    <variation>QAV</variation>
    <location>
        <position position="1885"/>
    </location>
</feature>
<feature type="splice variant" id="VSP_061617" description="In isoform 2.">
    <original>ITGRDDPAKCGVERPYTTRVTSKGTAAVPVVSISSSAEV</original>
    <variation>LCRGPCLYSFCASVSSISLSTVSKSDYGQGRPSKVRSGATLHHTCN</variation>
    <location>
        <begin position="2149"/>
        <end position="2187"/>
    </location>
</feature>
<feature type="splice variant" id="VSP_061618" description="In isoform 3.">
    <original>ITGRDDPAKCGVERPYTTRVTSKGTAAVPVVSISSSAEV</original>
    <variation>LCRGPCLYSFCASVSSISLSTVSKSGTSFSLYVYPVLQPPVHPPLLITSPVPQSALVAQLLLRLHCHLKTRHVDSLAFKKKTHAPSSPKCIFELFQFFKTKTQNVFMILQNIKEKHRPGVEEERNRKWLFYKGNL</variation>
    <location>
        <begin position="2149"/>
        <end position="2187"/>
    </location>
</feature>
<feature type="sequence conflict" description="In Ref. 4; BAC28567." evidence="14" ref="4">
    <original>K</original>
    <variation>R</variation>
    <location>
        <position position="2014"/>
    </location>
</feature>
<feature type="helix" evidence="18">
    <location>
        <begin position="1680"/>
        <end position="1690"/>
    </location>
</feature>
<feature type="strand" evidence="18">
    <location>
        <begin position="1692"/>
        <end position="1694"/>
    </location>
</feature>
<feature type="helix" evidence="18">
    <location>
        <begin position="1696"/>
        <end position="1713"/>
    </location>
</feature>
<feature type="helix" evidence="18">
    <location>
        <begin position="1716"/>
        <end position="1737"/>
    </location>
</feature>
<feature type="helix" evidence="18">
    <location>
        <begin position="1773"/>
        <end position="1775"/>
    </location>
</feature>
<feature type="helix" evidence="18">
    <location>
        <begin position="1778"/>
        <end position="1780"/>
    </location>
</feature>
<feature type="turn" evidence="18">
    <location>
        <begin position="1781"/>
        <end position="1783"/>
    </location>
</feature>
<feature type="helix" evidence="18">
    <location>
        <begin position="1785"/>
        <end position="1791"/>
    </location>
</feature>
<feature type="helix" evidence="18">
    <location>
        <begin position="1806"/>
        <end position="1822"/>
    </location>
</feature>
<feature type="helix" evidence="18">
    <location>
        <begin position="1826"/>
        <end position="1828"/>
    </location>
</feature>
<feature type="helix" evidence="18">
    <location>
        <begin position="1829"/>
        <end position="1842"/>
    </location>
</feature>
<feature type="helix" evidence="18">
    <location>
        <begin position="1846"/>
        <end position="1866"/>
    </location>
</feature>
<feature type="strand" evidence="18">
    <location>
        <begin position="1867"/>
        <end position="1869"/>
    </location>
</feature>
<feature type="strand" evidence="19">
    <location>
        <begin position="1876"/>
        <end position="1883"/>
    </location>
</feature>
<feature type="turn" evidence="19">
    <location>
        <begin position="1885"/>
        <end position="1887"/>
    </location>
</feature>
<feature type="turn" evidence="19">
    <location>
        <begin position="1890"/>
        <end position="1893"/>
    </location>
</feature>
<feature type="strand" evidence="19">
    <location>
        <begin position="1895"/>
        <end position="1900"/>
    </location>
</feature>
<feature type="helix" evidence="19">
    <location>
        <begin position="1906"/>
        <end position="1921"/>
    </location>
</feature>
<feature type="helix" evidence="19">
    <location>
        <begin position="1923"/>
        <end position="1925"/>
    </location>
</feature>
<feature type="strand" evidence="19">
    <location>
        <begin position="1926"/>
        <end position="1929"/>
    </location>
</feature>
<feature type="helix" evidence="19">
    <location>
        <begin position="1937"/>
        <end position="1939"/>
    </location>
</feature>
<feature type="strand" evidence="19">
    <location>
        <begin position="1944"/>
        <end position="1954"/>
    </location>
</feature>
<feature type="helix" evidence="19">
    <location>
        <begin position="1958"/>
        <end position="1963"/>
    </location>
</feature>
<feature type="helix" evidence="19">
    <location>
        <begin position="1967"/>
        <end position="1969"/>
    </location>
</feature>
<feature type="strand" evidence="19">
    <location>
        <begin position="1970"/>
        <end position="1983"/>
    </location>
</feature>
<feature type="strand" evidence="18">
    <location>
        <begin position="1987"/>
        <end position="1989"/>
    </location>
</feature>
<feature type="turn" evidence="19">
    <location>
        <begin position="1993"/>
        <end position="1995"/>
    </location>
</feature>
<feature type="strand" evidence="19">
    <location>
        <begin position="1997"/>
        <end position="2010"/>
    </location>
</feature>
<feature type="strand" evidence="19">
    <location>
        <begin position="2012"/>
        <end position="2026"/>
    </location>
</feature>
<feature type="helix" evidence="19">
    <location>
        <begin position="2028"/>
        <end position="2048"/>
    </location>
</feature>
<feature type="strand" evidence="20">
    <location>
        <begin position="2049"/>
        <end position="2051"/>
    </location>
</feature>
<feature type="helix" evidence="19">
    <location>
        <begin position="2054"/>
        <end position="2065"/>
    </location>
</feature>
<feature type="strand" evidence="19">
    <location>
        <begin position="2068"/>
        <end position="2070"/>
    </location>
</feature>
<feature type="helix" evidence="19">
    <location>
        <begin position="2074"/>
        <end position="2080"/>
    </location>
</feature>
<feature type="helix" evidence="18">
    <location>
        <begin position="2083"/>
        <end position="2088"/>
    </location>
</feature>
<feature type="helix" evidence="19">
    <location>
        <begin position="2091"/>
        <end position="2118"/>
    </location>
</feature>
<feature type="helix" evidence="19">
    <location>
        <begin position="2121"/>
        <end position="2123"/>
    </location>
</feature>
<feature type="helix" evidence="19">
    <location>
        <begin position="2124"/>
        <end position="2145"/>
    </location>
</feature>
<proteinExistence type="evidence at protein level"/>
<protein>
    <recommendedName>
        <fullName evidence="14">Dedicator of cytokinesis protein 10</fullName>
    </recommendedName>
    <alternativeName>
        <fullName>Zizimin-3</fullName>
    </alternativeName>
</protein>
<evidence type="ECO:0000250" key="1">
    <source>
        <dbReference type="UniProtKB" id="Q96BY6"/>
    </source>
</evidence>
<evidence type="ECO:0000255" key="2">
    <source>
        <dbReference type="PROSITE-ProRule" id="PRU00145"/>
    </source>
</evidence>
<evidence type="ECO:0000255" key="3">
    <source>
        <dbReference type="PROSITE-ProRule" id="PRU00983"/>
    </source>
</evidence>
<evidence type="ECO:0000255" key="4">
    <source>
        <dbReference type="PROSITE-ProRule" id="PRU00984"/>
    </source>
</evidence>
<evidence type="ECO:0000256" key="5">
    <source>
        <dbReference type="SAM" id="MobiDB-lite"/>
    </source>
</evidence>
<evidence type="ECO:0000269" key="6">
    <source>
    </source>
</evidence>
<evidence type="ECO:0000269" key="7">
    <source>
    </source>
</evidence>
<evidence type="ECO:0000269" key="8">
    <source>
    </source>
</evidence>
<evidence type="ECO:0000269" key="9">
    <source>
    </source>
</evidence>
<evidence type="ECO:0000269" key="10">
    <source>
    </source>
</evidence>
<evidence type="ECO:0000303" key="11">
    <source>
    </source>
</evidence>
<evidence type="ECO:0000303" key="12">
    <source>
    </source>
</evidence>
<evidence type="ECO:0000303" key="13">
    <source>
    </source>
</evidence>
<evidence type="ECO:0000305" key="14"/>
<evidence type="ECO:0000312" key="15">
    <source>
        <dbReference type="MGI" id="MGI:2146320"/>
    </source>
</evidence>
<evidence type="ECO:0007744" key="16">
    <source>
    </source>
</evidence>
<evidence type="ECO:0007744" key="17">
    <source>
    </source>
</evidence>
<evidence type="ECO:0007829" key="18">
    <source>
        <dbReference type="PDB" id="8I5F"/>
    </source>
</evidence>
<evidence type="ECO:0007829" key="19">
    <source>
        <dbReference type="PDB" id="8I5V"/>
    </source>
</evidence>
<evidence type="ECO:0007829" key="20">
    <source>
        <dbReference type="PDB" id="8I5W"/>
    </source>
</evidence>
<comment type="function">
    <text evidence="9 10">Guanine nucleotide-exchange factor (GEF) that activates CDC42 and RAC1 by exchanging bound GDP for free GTP. Essential for dendritic spine morphogenesis in Purkinje cells and in hippocampal neurons, via a CDC42-mediated pathway (PubMed:25851601). Sustains B-cell lymphopoiesis in secondary lymphoid tissues and regulates FCER2/CD23 expression (PubMed:27502165).</text>
</comment>
<comment type="subcellular location">
    <subcellularLocation>
        <location evidence="1">Nucleus</location>
    </subcellularLocation>
    <subcellularLocation>
        <location evidence="1">Cytoplasm</location>
    </subcellularLocation>
    <subcellularLocation>
        <location evidence="9">Cell projection</location>
        <location evidence="9">Dendritic spine</location>
    </subcellularLocation>
</comment>
<comment type="alternative products">
    <event type="alternative splicing"/>
    <isoform>
        <id>Q8BZN6-1</id>
        <name>1</name>
        <name evidence="13">DOCK10.1</name>
        <sequence type="displayed"/>
    </isoform>
    <isoform>
        <id>Q8BZN6-2</id>
        <name>2</name>
        <sequence type="described" ref="VSP_007718 VSP_061616 VSP_061617"/>
    </isoform>
    <isoform>
        <id>Q8BZN6-3</id>
        <name>3</name>
        <sequence type="described" ref="VSP_007718 VSP_061616 VSP_061618"/>
    </isoform>
    <isoform>
        <id>Q8BZN6-4</id>
        <name>4</name>
        <name evidence="13">DOCK10.2</name>
        <sequence type="described" ref="VSP_058821"/>
    </isoform>
</comment>
<comment type="tissue specificity">
    <text evidence="6 7 8 9">Expressed in brain, lung, spleen, mesenteric lymph nodes (MLN) and thymus (PubMed:15710388, PubMed:25729399). Expressed by B and T splenocytes (PubMed:21514340). In brain, expressed by Purkinje cells during postnatal development and hippocampal neurons (PubMed:25851601).</text>
</comment>
<comment type="developmental stage">
    <text evidence="9">At early postnatal stages, expressed broadly in the cerebellum and from P15 the expression becomes restricted to Purkinje cells.</text>
</comment>
<comment type="induction">
    <text evidence="7">Isoform 4: Highly induced by IL4 in B splenocytes, but not T splenocytes.</text>
</comment>
<comment type="domain">
    <text evidence="9">The DOCKER domain may mediate some GEF activity.</text>
</comment>
<comment type="disruption phenotype">
    <text evidence="8 10">Knockout mice are viable and fertile (PubMed:25729399, PubMed:27502165). They show decreased numbers of B-cells in spleen, both follicular B-cells and marginal zone B-cells, and in peripheral blood, but not in bone marrow (PubMed:25729399, PubMed:27502165). Their percentage of splenic CD8(+) T-cells is decreased comparing to wild types (PubMed:25729399).</text>
</comment>
<comment type="miscellaneous">
    <text evidence="14">'Zizim' means 'spike' in Hebrew.</text>
</comment>
<comment type="similarity">
    <text evidence="3">Belongs to the DOCK family.</text>
</comment>
<comment type="sequence caution" evidence="14">
    <conflict type="erroneous initiation">
        <sequence resource="EMBL-CDS" id="ADK73961"/>
    </conflict>
    <text>Truncated N-terminus.</text>
</comment>
<comment type="sequence caution" evidence="14">
    <conflict type="erroneous initiation">
        <sequence resource="EMBL-CDS" id="BAC28567"/>
    </conflict>
    <text>Truncated N-terminus.</text>
</comment>
<name>DOC10_MOUSE</name>